<keyword id="KW-0150">Chloroplast</keyword>
<keyword id="KW-0406">Ion transport</keyword>
<keyword id="KW-0472">Membrane</keyword>
<keyword id="KW-0934">Plastid</keyword>
<keyword id="KW-1002">Plastid outer membrane</keyword>
<keyword id="KW-0626">Porin</keyword>
<keyword id="KW-1185">Reference proteome</keyword>
<keyword id="KW-0812">Transmembrane</keyword>
<keyword id="KW-1134">Transmembrane beta strand</keyword>
<keyword id="KW-0813">Transport</keyword>
<evidence type="ECO:0000250" key="1"/>
<evidence type="ECO:0000255" key="2"/>
<evidence type="ECO:0000305" key="3"/>
<protein>
    <recommendedName>
        <fullName>Outer envelope pore protein 24B, chloroplastic</fullName>
    </recommendedName>
    <alternativeName>
        <fullName>Chloroplastic outer envelope pore protein of 24 kDa B</fullName>
    </alternativeName>
</protein>
<gene>
    <name type="primary">OEP24B</name>
    <name type="ordered locus">At5g42960</name>
    <name type="ORF">MBD2.16</name>
</gene>
<proteinExistence type="evidence at transcript level"/>
<comment type="function">
    <text evidence="1">High-conductance voltage-dependent solute channel with a slight selectivity for cations transporting triosephosphates, dicarboxylic acids, ATP, inorganic phosphate (Pi), sugars, and positively or negatively charged amino acids.</text>
</comment>
<comment type="subunit">
    <text evidence="1">Homooligomers form large rather nonselective pores in plastidial outer membranes.</text>
</comment>
<comment type="subcellular location">
    <subcellularLocation>
        <location evidence="1">Plastid</location>
        <location evidence="1">Etioplast membrane</location>
        <topology evidence="1">Multi-pass membrane protein</topology>
    </subcellularLocation>
    <subcellularLocation>
        <location>Plastid</location>
        <location>Chloroplast outer membrane</location>
        <topology>Multi-pass membrane protein</topology>
    </subcellularLocation>
    <text evidence="1">Present in non-green root plastids.</text>
</comment>
<comment type="similarity">
    <text evidence="3">Belongs to the plastid outer envelope porin OEP24 (TC 1.B.28) family.</text>
</comment>
<comment type="sequence caution" evidence="3">
    <conflict type="erroneous termination">
        <sequence resource="EMBL-CDS" id="ABK28739"/>
    </conflict>
    <text>Extended C-terminus.</text>
</comment>
<comment type="sequence caution" evidence="3">
    <conflict type="erroneous initiation">
        <sequence resource="EMBL-CDS" id="BAB09198"/>
    </conflict>
    <text>Truncated N-terminus.</text>
</comment>
<accession>Q8H0Y1</accession>
<accession>A0MFL7</accession>
<accession>Q93XX9</accession>
<accession>Q9FMM2</accession>
<organism>
    <name type="scientific">Arabidopsis thaliana</name>
    <name type="common">Mouse-ear cress</name>
    <dbReference type="NCBI Taxonomy" id="3702"/>
    <lineage>
        <taxon>Eukaryota</taxon>
        <taxon>Viridiplantae</taxon>
        <taxon>Streptophyta</taxon>
        <taxon>Embryophyta</taxon>
        <taxon>Tracheophyta</taxon>
        <taxon>Spermatophyta</taxon>
        <taxon>Magnoliopsida</taxon>
        <taxon>eudicotyledons</taxon>
        <taxon>Gunneridae</taxon>
        <taxon>Pentapetalae</taxon>
        <taxon>rosids</taxon>
        <taxon>malvids</taxon>
        <taxon>Brassicales</taxon>
        <taxon>Brassicaceae</taxon>
        <taxon>Camelineae</taxon>
        <taxon>Arabidopsis</taxon>
    </lineage>
</organism>
<name>OP24B_ARATH</name>
<sequence length="213" mass="23411">MAMKASIKGKYDTDKTSGIGSLAFNAGDIKLRATMTDATLVAGPTLTGLALAVEKPGSFIVEYNVPKKDVRFQFMNTVRIAEKPLNLTYIHSRADNRTIVDGSLVIDSANKLSANHMVGTNNCKIKYTYAHGGLATFEPCYDLAKNTWDFAVSRRFYSGDNVRATYQTSSKLLGMEWSRNNKASGFKVCASVNLADELKTPKLTAETTWNLEM</sequence>
<reference key="1">
    <citation type="journal article" date="1997" name="DNA Res.">
        <title>Structural analysis of Arabidopsis thaliana chromosome 5. III. Sequence features of the regions of 1,191,918 bp covered by seventeen physically assigned P1 clones.</title>
        <authorList>
            <person name="Nakamura Y."/>
            <person name="Sato S."/>
            <person name="Kaneko T."/>
            <person name="Kotani H."/>
            <person name="Asamizu E."/>
            <person name="Miyajima N."/>
            <person name="Tabata S."/>
        </authorList>
    </citation>
    <scope>NUCLEOTIDE SEQUENCE [LARGE SCALE GENOMIC DNA]</scope>
    <source>
        <strain>cv. Columbia</strain>
    </source>
</reference>
<reference key="2">
    <citation type="journal article" date="2017" name="Plant J.">
        <title>Araport11: a complete reannotation of the Arabidopsis thaliana reference genome.</title>
        <authorList>
            <person name="Cheng C.Y."/>
            <person name="Krishnakumar V."/>
            <person name="Chan A.P."/>
            <person name="Thibaud-Nissen F."/>
            <person name="Schobel S."/>
            <person name="Town C.D."/>
        </authorList>
    </citation>
    <scope>GENOME REANNOTATION</scope>
    <source>
        <strain>cv. Columbia</strain>
    </source>
</reference>
<reference key="3">
    <citation type="journal article" date="2003" name="Science">
        <title>Empirical analysis of transcriptional activity in the Arabidopsis genome.</title>
        <authorList>
            <person name="Yamada K."/>
            <person name="Lim J."/>
            <person name="Dale J.M."/>
            <person name="Chen H."/>
            <person name="Shinn P."/>
            <person name="Palm C.J."/>
            <person name="Southwick A.M."/>
            <person name="Wu H.C."/>
            <person name="Kim C.J."/>
            <person name="Nguyen M."/>
            <person name="Pham P.K."/>
            <person name="Cheuk R.F."/>
            <person name="Karlin-Newmann G."/>
            <person name="Liu S.X."/>
            <person name="Lam B."/>
            <person name="Sakano H."/>
            <person name="Wu T."/>
            <person name="Yu G."/>
            <person name="Miranda M."/>
            <person name="Quach H.L."/>
            <person name="Tripp M."/>
            <person name="Chang C.H."/>
            <person name="Lee J.M."/>
            <person name="Toriumi M.J."/>
            <person name="Chan M.M."/>
            <person name="Tang C.C."/>
            <person name="Onodera C.S."/>
            <person name="Deng J.M."/>
            <person name="Akiyama K."/>
            <person name="Ansari Y."/>
            <person name="Arakawa T."/>
            <person name="Banh J."/>
            <person name="Banno F."/>
            <person name="Bowser L."/>
            <person name="Brooks S.Y."/>
            <person name="Carninci P."/>
            <person name="Chao Q."/>
            <person name="Choy N."/>
            <person name="Enju A."/>
            <person name="Goldsmith A.D."/>
            <person name="Gurjal M."/>
            <person name="Hansen N.F."/>
            <person name="Hayashizaki Y."/>
            <person name="Johnson-Hopson C."/>
            <person name="Hsuan V.W."/>
            <person name="Iida K."/>
            <person name="Karnes M."/>
            <person name="Khan S."/>
            <person name="Koesema E."/>
            <person name="Ishida J."/>
            <person name="Jiang P.X."/>
            <person name="Jones T."/>
            <person name="Kawai J."/>
            <person name="Kamiya A."/>
            <person name="Meyers C."/>
            <person name="Nakajima M."/>
            <person name="Narusaka M."/>
            <person name="Seki M."/>
            <person name="Sakurai T."/>
            <person name="Satou M."/>
            <person name="Tamse R."/>
            <person name="Vaysberg M."/>
            <person name="Wallender E.K."/>
            <person name="Wong C."/>
            <person name="Yamamura Y."/>
            <person name="Yuan S."/>
            <person name="Shinozaki K."/>
            <person name="Davis R.W."/>
            <person name="Theologis A."/>
            <person name="Ecker J.R."/>
        </authorList>
    </citation>
    <scope>NUCLEOTIDE SEQUENCE [LARGE SCALE MRNA]</scope>
    <source>
        <strain>cv. Columbia</strain>
    </source>
</reference>
<reference key="4">
    <citation type="journal article" date="2006" name="Plant Biotechnol. J.">
        <title>Simultaneous high-throughput recombinational cloning of open reading frames in closed and open configurations.</title>
        <authorList>
            <person name="Underwood B.A."/>
            <person name="Vanderhaeghen R."/>
            <person name="Whitford R."/>
            <person name="Town C.D."/>
            <person name="Hilson P."/>
        </authorList>
    </citation>
    <scope>NUCLEOTIDE SEQUENCE [LARGE SCALE MRNA]</scope>
    <source>
        <strain>cv. Columbia</strain>
    </source>
</reference>
<reference key="5">
    <citation type="journal article" date="2003" name="Protein Sci.">
        <title>Prediction of the plant beta-barrel proteome: a case study of the chloroplast outer envelope.</title>
        <authorList>
            <person name="Schleiff E."/>
            <person name="Eichacker L.A."/>
            <person name="Eckart K."/>
            <person name="Becker T."/>
            <person name="Mirus O."/>
            <person name="Stahl T."/>
            <person name="Soll J."/>
        </authorList>
    </citation>
    <scope>GENE FAMILY</scope>
</reference>
<dbReference type="EMBL" id="AB008264">
    <property type="protein sequence ID" value="BAB09198.1"/>
    <property type="status" value="ALT_INIT"/>
    <property type="molecule type" value="Genomic_DNA"/>
</dbReference>
<dbReference type="EMBL" id="CP002688">
    <property type="protein sequence ID" value="AED94894.1"/>
    <property type="molecule type" value="Genomic_DNA"/>
</dbReference>
<dbReference type="EMBL" id="AY054647">
    <property type="protein sequence ID" value="AAK96838.1"/>
    <property type="molecule type" value="mRNA"/>
</dbReference>
<dbReference type="EMBL" id="BT001163">
    <property type="protein sequence ID" value="AAN65050.1"/>
    <property type="molecule type" value="mRNA"/>
</dbReference>
<dbReference type="EMBL" id="DQ487722">
    <property type="protein sequence ID" value="ABF59284.1"/>
    <property type="molecule type" value="mRNA"/>
</dbReference>
<dbReference type="EMBL" id="DQ653343">
    <property type="protein sequence ID" value="ABK28739.1"/>
    <property type="status" value="ALT_SEQ"/>
    <property type="molecule type" value="mRNA"/>
</dbReference>
<dbReference type="RefSeq" id="NP_568618.1">
    <property type="nucleotide sequence ID" value="NM_123662.3"/>
</dbReference>
<dbReference type="FunCoup" id="Q8H0Y1">
    <property type="interactions" value="1358"/>
</dbReference>
<dbReference type="STRING" id="3702.Q8H0Y1"/>
<dbReference type="SwissPalm" id="Q8H0Y1"/>
<dbReference type="PaxDb" id="3702-AT5G42960.1"/>
<dbReference type="ProteomicsDB" id="248899"/>
<dbReference type="DNASU" id="834310"/>
<dbReference type="EnsemblPlants" id="AT5G42960.1">
    <property type="protein sequence ID" value="AT5G42960.1"/>
    <property type="gene ID" value="AT5G42960"/>
</dbReference>
<dbReference type="GeneID" id="834310"/>
<dbReference type="Gramene" id="AT5G42960.1">
    <property type="protein sequence ID" value="AT5G42960.1"/>
    <property type="gene ID" value="AT5G42960"/>
</dbReference>
<dbReference type="KEGG" id="ath:AT5G42960"/>
<dbReference type="Araport" id="AT5G42960"/>
<dbReference type="TAIR" id="AT5G42960"/>
<dbReference type="eggNOG" id="ENOG502QUHD">
    <property type="taxonomic scope" value="Eukaryota"/>
</dbReference>
<dbReference type="HOGENOM" id="CLU_077010_0_0_1"/>
<dbReference type="InParanoid" id="Q8H0Y1"/>
<dbReference type="OMA" id="AESTWNF"/>
<dbReference type="PhylomeDB" id="Q8H0Y1"/>
<dbReference type="CD-CODE" id="4299E36E">
    <property type="entry name" value="Nucleolus"/>
</dbReference>
<dbReference type="PRO" id="PR:Q8H0Y1"/>
<dbReference type="Proteomes" id="UP000006548">
    <property type="component" value="Chromosome 5"/>
</dbReference>
<dbReference type="ExpressionAtlas" id="Q8H0Y1">
    <property type="expression patterns" value="baseline and differential"/>
</dbReference>
<dbReference type="GO" id="GO:0009507">
    <property type="term" value="C:chloroplast"/>
    <property type="evidence" value="ECO:0007005"/>
    <property type="project" value="TAIR"/>
</dbReference>
<dbReference type="GO" id="GO:0009941">
    <property type="term" value="C:chloroplast envelope"/>
    <property type="evidence" value="ECO:0007005"/>
    <property type="project" value="TAIR"/>
</dbReference>
<dbReference type="GO" id="GO:0009707">
    <property type="term" value="C:chloroplast outer membrane"/>
    <property type="evidence" value="ECO:0000250"/>
    <property type="project" value="UniProtKB"/>
</dbReference>
<dbReference type="GO" id="GO:0034426">
    <property type="term" value="C:etioplast membrane"/>
    <property type="evidence" value="ECO:0000250"/>
    <property type="project" value="UniProtKB"/>
</dbReference>
<dbReference type="GO" id="GO:0009536">
    <property type="term" value="C:plastid"/>
    <property type="evidence" value="ECO:0007005"/>
    <property type="project" value="TAIR"/>
</dbReference>
<dbReference type="GO" id="GO:0046930">
    <property type="term" value="C:pore complex"/>
    <property type="evidence" value="ECO:0000250"/>
    <property type="project" value="UniProtKB"/>
</dbReference>
<dbReference type="GO" id="GO:0015288">
    <property type="term" value="F:porin activity"/>
    <property type="evidence" value="ECO:0000250"/>
    <property type="project" value="UniProtKB"/>
</dbReference>
<dbReference type="GO" id="GO:0022843">
    <property type="term" value="F:voltage-gated monoatomic cation channel activity"/>
    <property type="evidence" value="ECO:0000250"/>
    <property type="project" value="UniProtKB"/>
</dbReference>
<dbReference type="GO" id="GO:0034765">
    <property type="term" value="P:regulation of monoatomic ion transmembrane transport"/>
    <property type="evidence" value="ECO:0000250"/>
    <property type="project" value="UniProtKB"/>
</dbReference>
<dbReference type="InterPro" id="IPR034626">
    <property type="entry name" value="OEP24"/>
</dbReference>
<dbReference type="PANTHER" id="PTHR35284">
    <property type="entry name" value="OUTER ENVELOPE PORE PROTEIN 24A, CHLOROPLASTIC-RELATED"/>
    <property type="match status" value="1"/>
</dbReference>
<dbReference type="PANTHER" id="PTHR35284:SF1">
    <property type="entry name" value="OUTER ENVELOPE PORE PROTEIN 24A, CHLOROPLASTIC-RELATED"/>
    <property type="match status" value="1"/>
</dbReference>
<feature type="chain" id="PRO_0000415537" description="Outer envelope pore protein 24B, chloroplastic">
    <location>
        <begin position="1"/>
        <end position="213"/>
    </location>
</feature>
<feature type="topological domain" description="Cytoplasmic" evidence="2">
    <location>
        <begin position="1"/>
        <end position="3"/>
    </location>
</feature>
<feature type="transmembrane region" description="Beta stranded; Name=1" evidence="2">
    <location>
        <begin position="4"/>
        <end position="13"/>
    </location>
</feature>
<feature type="topological domain" description="Chloroplast intermembrane" evidence="2">
    <location>
        <begin position="14"/>
        <end position="18"/>
    </location>
</feature>
<feature type="transmembrane region" description="Beta stranded; Name=2" evidence="2">
    <location>
        <begin position="19"/>
        <end position="28"/>
    </location>
</feature>
<feature type="topological domain" description="Cytoplasmic" evidence="2">
    <location>
        <begin position="29"/>
        <end position="32"/>
    </location>
</feature>
<feature type="transmembrane region" description="Beta stranded; Name=3" evidence="2">
    <location>
        <begin position="33"/>
        <end position="42"/>
    </location>
</feature>
<feature type="topological domain" description="Chloroplast intermembrane" evidence="2">
    <location>
        <begin position="43"/>
        <end position="55"/>
    </location>
</feature>
<feature type="transmembrane region" description="Beta stranded; Name=4" evidence="2">
    <location>
        <begin position="56"/>
        <end position="64"/>
    </location>
</feature>
<feature type="topological domain" description="Cytoplasmic" evidence="2">
    <location>
        <begin position="65"/>
        <end position="70"/>
    </location>
</feature>
<feature type="transmembrane region" description="Beta stranded; Name=5" evidence="2">
    <location>
        <begin position="71"/>
        <end position="80"/>
    </location>
</feature>
<feature type="topological domain" description="Chloroplast intermembrane" evidence="2">
    <location>
        <begin position="81"/>
        <end position="93"/>
    </location>
</feature>
<feature type="transmembrane region" description="Beta stranded; Name=6" evidence="2">
    <location>
        <begin position="94"/>
        <end position="103"/>
    </location>
</feature>
<feature type="topological domain" description="Cytoplasmic" evidence="2">
    <location>
        <begin position="104"/>
        <end position="108"/>
    </location>
</feature>
<feature type="transmembrane region" description="Beta stranded; Name=7" evidence="2">
    <location>
        <begin position="109"/>
        <end position="118"/>
    </location>
</feature>
<feature type="topological domain" description="Chloroplast intermembrane" evidence="2">
    <location>
        <begin position="119"/>
        <end position="122"/>
    </location>
</feature>
<feature type="transmembrane region" description="Beta stranded; Name=8" evidence="2">
    <location>
        <begin position="123"/>
        <end position="132"/>
    </location>
</feature>
<feature type="topological domain" description="Cytoplasmic" evidence="2">
    <location>
        <begin position="133"/>
        <end position="144"/>
    </location>
</feature>
<feature type="transmembrane region" description="Beta stranded; Name=9" evidence="2">
    <location>
        <begin position="145"/>
        <end position="156"/>
    </location>
</feature>
<feature type="topological domain" description="Chloroplast intermembrane" evidence="2">
    <location>
        <begin position="157"/>
        <end position="159"/>
    </location>
</feature>
<feature type="transmembrane region" description="Beta stranded; Name=10" evidence="2">
    <location>
        <begin position="160"/>
        <end position="168"/>
    </location>
</feature>
<feature type="topological domain" description="Cytoplasmic" evidence="2">
    <location>
        <begin position="169"/>
        <end position="170"/>
    </location>
</feature>
<feature type="transmembrane region" description="Beta stranded; Name=11" evidence="2">
    <location>
        <begin position="171"/>
        <end position="179"/>
    </location>
</feature>
<feature type="topological domain" description="Chloroplast intermembrane" evidence="2">
    <location>
        <begin position="180"/>
        <end position="201"/>
    </location>
</feature>
<feature type="transmembrane region" description="Beta stranded; Name=12" evidence="2">
    <location>
        <begin position="202"/>
        <end position="211"/>
    </location>
</feature>
<feature type="topological domain" description="Cytoplasmic" evidence="2">
    <location>
        <begin position="212"/>
        <end position="213"/>
    </location>
</feature>
<feature type="sequence conflict" description="In Ref. 3; AAK96838." evidence="3" ref="3">
    <original>V</original>
    <variation>G</variation>
    <location>
        <position position="41"/>
    </location>
</feature>
<feature type="sequence conflict" description="In Ref. 3; AAK96838." evidence="3" ref="3">
    <original>E</original>
    <variation>K</variation>
    <location>
        <position position="54"/>
    </location>
</feature>